<keyword id="KW-1185">Reference proteome</keyword>
<sequence length="208" mass="23497">MTHFLYLTPEILLPFSPLTSTEFELIRRKAQQLWQDETRWSASSMTTYSGSYREKQLDEATCNRLAQRVGQPQFEYKPTPLPGSSAYNTLPGHAGSQEAADGKGRLPDIASPSRDSPLNIKHKVAHQIWGSEVPCPTFLAYRGLRMSPCMQPKKPGFELLMSYRNRGKALLKRLQRQWDYESKLGSSEDSGTDRFSSNTSGSSGRKFK</sequence>
<name>CD051_MOUSE</name>
<evidence type="ECO:0000256" key="1">
    <source>
        <dbReference type="SAM" id="MobiDB-lite"/>
    </source>
</evidence>
<evidence type="ECO:0000305" key="2"/>
<accession>Q9DAF8</accession>
<accession>G3X910</accession>
<reference key="1">
    <citation type="journal article" date="2005" name="Science">
        <title>The transcriptional landscape of the mammalian genome.</title>
        <authorList>
            <person name="Carninci P."/>
            <person name="Kasukawa T."/>
            <person name="Katayama S."/>
            <person name="Gough J."/>
            <person name="Frith M.C."/>
            <person name="Maeda N."/>
            <person name="Oyama R."/>
            <person name="Ravasi T."/>
            <person name="Lenhard B."/>
            <person name="Wells C."/>
            <person name="Kodzius R."/>
            <person name="Shimokawa K."/>
            <person name="Bajic V.B."/>
            <person name="Brenner S.E."/>
            <person name="Batalov S."/>
            <person name="Forrest A.R."/>
            <person name="Zavolan M."/>
            <person name="Davis M.J."/>
            <person name="Wilming L.G."/>
            <person name="Aidinis V."/>
            <person name="Allen J.E."/>
            <person name="Ambesi-Impiombato A."/>
            <person name="Apweiler R."/>
            <person name="Aturaliya R.N."/>
            <person name="Bailey T.L."/>
            <person name="Bansal M."/>
            <person name="Baxter L."/>
            <person name="Beisel K.W."/>
            <person name="Bersano T."/>
            <person name="Bono H."/>
            <person name="Chalk A.M."/>
            <person name="Chiu K.P."/>
            <person name="Choudhary V."/>
            <person name="Christoffels A."/>
            <person name="Clutterbuck D.R."/>
            <person name="Crowe M.L."/>
            <person name="Dalla E."/>
            <person name="Dalrymple B.P."/>
            <person name="de Bono B."/>
            <person name="Della Gatta G."/>
            <person name="di Bernardo D."/>
            <person name="Down T."/>
            <person name="Engstrom P."/>
            <person name="Fagiolini M."/>
            <person name="Faulkner G."/>
            <person name="Fletcher C.F."/>
            <person name="Fukushima T."/>
            <person name="Furuno M."/>
            <person name="Futaki S."/>
            <person name="Gariboldi M."/>
            <person name="Georgii-Hemming P."/>
            <person name="Gingeras T.R."/>
            <person name="Gojobori T."/>
            <person name="Green R.E."/>
            <person name="Gustincich S."/>
            <person name="Harbers M."/>
            <person name="Hayashi Y."/>
            <person name="Hensch T.K."/>
            <person name="Hirokawa N."/>
            <person name="Hill D."/>
            <person name="Huminiecki L."/>
            <person name="Iacono M."/>
            <person name="Ikeo K."/>
            <person name="Iwama A."/>
            <person name="Ishikawa T."/>
            <person name="Jakt M."/>
            <person name="Kanapin A."/>
            <person name="Katoh M."/>
            <person name="Kawasawa Y."/>
            <person name="Kelso J."/>
            <person name="Kitamura H."/>
            <person name="Kitano H."/>
            <person name="Kollias G."/>
            <person name="Krishnan S.P."/>
            <person name="Kruger A."/>
            <person name="Kummerfeld S.K."/>
            <person name="Kurochkin I.V."/>
            <person name="Lareau L.F."/>
            <person name="Lazarevic D."/>
            <person name="Lipovich L."/>
            <person name="Liu J."/>
            <person name="Liuni S."/>
            <person name="McWilliam S."/>
            <person name="Madan Babu M."/>
            <person name="Madera M."/>
            <person name="Marchionni L."/>
            <person name="Matsuda H."/>
            <person name="Matsuzawa S."/>
            <person name="Miki H."/>
            <person name="Mignone F."/>
            <person name="Miyake S."/>
            <person name="Morris K."/>
            <person name="Mottagui-Tabar S."/>
            <person name="Mulder N."/>
            <person name="Nakano N."/>
            <person name="Nakauchi H."/>
            <person name="Ng P."/>
            <person name="Nilsson R."/>
            <person name="Nishiguchi S."/>
            <person name="Nishikawa S."/>
            <person name="Nori F."/>
            <person name="Ohara O."/>
            <person name="Okazaki Y."/>
            <person name="Orlando V."/>
            <person name="Pang K.C."/>
            <person name="Pavan W.J."/>
            <person name="Pavesi G."/>
            <person name="Pesole G."/>
            <person name="Petrovsky N."/>
            <person name="Piazza S."/>
            <person name="Reed J."/>
            <person name="Reid J.F."/>
            <person name="Ring B.Z."/>
            <person name="Ringwald M."/>
            <person name="Rost B."/>
            <person name="Ruan Y."/>
            <person name="Salzberg S.L."/>
            <person name="Sandelin A."/>
            <person name="Schneider C."/>
            <person name="Schoenbach C."/>
            <person name="Sekiguchi K."/>
            <person name="Semple C.A."/>
            <person name="Seno S."/>
            <person name="Sessa L."/>
            <person name="Sheng Y."/>
            <person name="Shibata Y."/>
            <person name="Shimada H."/>
            <person name="Shimada K."/>
            <person name="Silva D."/>
            <person name="Sinclair B."/>
            <person name="Sperling S."/>
            <person name="Stupka E."/>
            <person name="Sugiura K."/>
            <person name="Sultana R."/>
            <person name="Takenaka Y."/>
            <person name="Taki K."/>
            <person name="Tammoja K."/>
            <person name="Tan S.L."/>
            <person name="Tang S."/>
            <person name="Taylor M.S."/>
            <person name="Tegner J."/>
            <person name="Teichmann S.A."/>
            <person name="Ueda H.R."/>
            <person name="van Nimwegen E."/>
            <person name="Verardo R."/>
            <person name="Wei C.L."/>
            <person name="Yagi K."/>
            <person name="Yamanishi H."/>
            <person name="Zabarovsky E."/>
            <person name="Zhu S."/>
            <person name="Zimmer A."/>
            <person name="Hide W."/>
            <person name="Bult C."/>
            <person name="Grimmond S.M."/>
            <person name="Teasdale R.D."/>
            <person name="Liu E.T."/>
            <person name="Brusic V."/>
            <person name="Quackenbush J."/>
            <person name="Wahlestedt C."/>
            <person name="Mattick J.S."/>
            <person name="Hume D.A."/>
            <person name="Kai C."/>
            <person name="Sasaki D."/>
            <person name="Tomaru Y."/>
            <person name="Fukuda S."/>
            <person name="Kanamori-Katayama M."/>
            <person name="Suzuki M."/>
            <person name="Aoki J."/>
            <person name="Arakawa T."/>
            <person name="Iida J."/>
            <person name="Imamura K."/>
            <person name="Itoh M."/>
            <person name="Kato T."/>
            <person name="Kawaji H."/>
            <person name="Kawagashira N."/>
            <person name="Kawashima T."/>
            <person name="Kojima M."/>
            <person name="Kondo S."/>
            <person name="Konno H."/>
            <person name="Nakano K."/>
            <person name="Ninomiya N."/>
            <person name="Nishio T."/>
            <person name="Okada M."/>
            <person name="Plessy C."/>
            <person name="Shibata K."/>
            <person name="Shiraki T."/>
            <person name="Suzuki S."/>
            <person name="Tagami M."/>
            <person name="Waki K."/>
            <person name="Watahiki A."/>
            <person name="Okamura-Oho Y."/>
            <person name="Suzuki H."/>
            <person name="Kawai J."/>
            <person name="Hayashizaki Y."/>
        </authorList>
    </citation>
    <scope>NUCLEOTIDE SEQUENCE [LARGE SCALE MRNA]</scope>
    <source>
        <strain>C57BL/6J</strain>
        <tissue>Testis</tissue>
    </source>
</reference>
<reference key="2">
    <citation type="journal article" date="2009" name="PLoS Biol.">
        <title>Lineage-specific biology revealed by a finished genome assembly of the mouse.</title>
        <authorList>
            <person name="Church D.M."/>
            <person name="Goodstadt L."/>
            <person name="Hillier L.W."/>
            <person name="Zody M.C."/>
            <person name="Goldstein S."/>
            <person name="She X."/>
            <person name="Bult C.J."/>
            <person name="Agarwala R."/>
            <person name="Cherry J.L."/>
            <person name="DiCuccio M."/>
            <person name="Hlavina W."/>
            <person name="Kapustin Y."/>
            <person name="Meric P."/>
            <person name="Maglott D."/>
            <person name="Birtle Z."/>
            <person name="Marques A.C."/>
            <person name="Graves T."/>
            <person name="Zhou S."/>
            <person name="Teague B."/>
            <person name="Potamousis K."/>
            <person name="Churas C."/>
            <person name="Place M."/>
            <person name="Herschleb J."/>
            <person name="Runnheim R."/>
            <person name="Forrest D."/>
            <person name="Amos-Landgraf J."/>
            <person name="Schwartz D.C."/>
            <person name="Cheng Z."/>
            <person name="Lindblad-Toh K."/>
            <person name="Eichler E.E."/>
            <person name="Ponting C.P."/>
        </authorList>
    </citation>
    <scope>NUCLEOTIDE SEQUENCE [LARGE SCALE GENOMIC DNA]</scope>
    <source>
        <strain>C57BL/6J</strain>
    </source>
</reference>
<reference key="3">
    <citation type="submission" date="2005-07" db="EMBL/GenBank/DDBJ databases">
        <authorList>
            <person name="Mural R.J."/>
            <person name="Adams M.D."/>
            <person name="Myers E.W."/>
            <person name="Smith H.O."/>
            <person name="Venter J.C."/>
        </authorList>
    </citation>
    <scope>NUCLEOTIDE SEQUENCE [LARGE SCALE GENOMIC DNA]</scope>
</reference>
<feature type="chain" id="PRO_0000392539" description="Uncharacterized protein C4orf51 homolog">
    <location>
        <begin position="1"/>
        <end position="208"/>
    </location>
</feature>
<feature type="region of interest" description="Disordered" evidence="1">
    <location>
        <begin position="74"/>
        <end position="117"/>
    </location>
</feature>
<feature type="region of interest" description="Disordered" evidence="1">
    <location>
        <begin position="181"/>
        <end position="208"/>
    </location>
</feature>
<feature type="compositionally biased region" description="Polar residues" evidence="1">
    <location>
        <begin position="184"/>
        <end position="208"/>
    </location>
</feature>
<feature type="sequence conflict" description="In Ref. 1; BAB24292." evidence="2" ref="1">
    <original>W</original>
    <variation>G</variation>
    <location>
        <position position="40"/>
    </location>
</feature>
<protein>
    <recommendedName>
        <fullName>Uncharacterized protein C4orf51 homolog</fullName>
    </recommendedName>
</protein>
<proteinExistence type="evidence at transcript level"/>
<dbReference type="EMBL" id="AK005876">
    <property type="protein sequence ID" value="BAB24292.1"/>
    <property type="molecule type" value="mRNA"/>
</dbReference>
<dbReference type="EMBL" id="AC101790">
    <property type="status" value="NOT_ANNOTATED_CDS"/>
    <property type="molecule type" value="Genomic_DNA"/>
</dbReference>
<dbReference type="EMBL" id="CH466525">
    <property type="protein sequence ID" value="EDL10867.1"/>
    <property type="molecule type" value="Genomic_DNA"/>
</dbReference>
<dbReference type="CCDS" id="CCDS52605.1"/>
<dbReference type="RefSeq" id="NP_080591.1">
    <property type="nucleotide sequence ID" value="NM_026315.1"/>
</dbReference>
<dbReference type="PhosphoSitePlus" id="Q9DAF8"/>
<dbReference type="PaxDb" id="10090-ENSMUSP00000034109"/>
<dbReference type="Antibodypedia" id="62156">
    <property type="antibodies" value="41 antibodies from 7 providers"/>
</dbReference>
<dbReference type="Ensembl" id="ENSMUST00000034109.6">
    <property type="protein sequence ID" value="ENSMUSP00000034109.5"/>
    <property type="gene ID" value="ENSMUSG00000031682.6"/>
</dbReference>
<dbReference type="GeneID" id="67687"/>
<dbReference type="KEGG" id="mmu:67687"/>
<dbReference type="UCSC" id="uc009mil.2">
    <property type="organism name" value="mouse"/>
</dbReference>
<dbReference type="AGR" id="MGI:1914937"/>
<dbReference type="MGI" id="MGI:1914937">
    <property type="gene designation" value="1700011L22Rik"/>
</dbReference>
<dbReference type="VEuPathDB" id="HostDB:ENSMUSG00000031682"/>
<dbReference type="eggNOG" id="ENOG502T40P">
    <property type="taxonomic scope" value="Eukaryota"/>
</dbReference>
<dbReference type="GeneTree" id="ENSGT00520000060562"/>
<dbReference type="HOGENOM" id="CLU_116990_0_0_1"/>
<dbReference type="InParanoid" id="Q9DAF8"/>
<dbReference type="OrthoDB" id="9972253at2759"/>
<dbReference type="BioGRID-ORCS" id="67687">
    <property type="hits" value="4 hits in 77 CRISPR screens"/>
</dbReference>
<dbReference type="PRO" id="PR:Q9DAF8"/>
<dbReference type="Proteomes" id="UP000000589">
    <property type="component" value="Chromosome 8"/>
</dbReference>
<dbReference type="RNAct" id="Q9DAF8">
    <property type="molecule type" value="protein"/>
</dbReference>
<dbReference type="Bgee" id="ENSMUSG00000031682">
    <property type="expression patterns" value="Expressed in seminiferous tubule of testis and 9 other cell types or tissues"/>
</dbReference>
<dbReference type="InterPro" id="IPR031708">
    <property type="entry name" value="DUF4722"/>
</dbReference>
<dbReference type="Pfam" id="PF15849">
    <property type="entry name" value="DUF4722"/>
    <property type="match status" value="1"/>
</dbReference>
<organism>
    <name type="scientific">Mus musculus</name>
    <name type="common">Mouse</name>
    <dbReference type="NCBI Taxonomy" id="10090"/>
    <lineage>
        <taxon>Eukaryota</taxon>
        <taxon>Metazoa</taxon>
        <taxon>Chordata</taxon>
        <taxon>Craniata</taxon>
        <taxon>Vertebrata</taxon>
        <taxon>Euteleostomi</taxon>
        <taxon>Mammalia</taxon>
        <taxon>Eutheria</taxon>
        <taxon>Euarchontoglires</taxon>
        <taxon>Glires</taxon>
        <taxon>Rodentia</taxon>
        <taxon>Myomorpha</taxon>
        <taxon>Muroidea</taxon>
        <taxon>Muridae</taxon>
        <taxon>Murinae</taxon>
        <taxon>Mus</taxon>
        <taxon>Mus</taxon>
    </lineage>
</organism>